<reference key="1">
    <citation type="journal article" date="2000" name="Nature">
        <title>An electroneutral sodium/bicarbonate cotransporter NBCn1 and associated sodium channel.</title>
        <authorList>
            <person name="Choi I."/>
            <person name="Aalkjaer C."/>
            <person name="Boulpaep E.L."/>
            <person name="Boron W.F."/>
        </authorList>
    </citation>
    <scope>NUCLEOTIDE SEQUENCE [MRNA] (ISOFORMS 1; 2 AND 3)</scope>
    <scope>FUNCTION</scope>
    <scope>TISSUE SPECIFICITY</scope>
    <scope>TRANSPORTER ACTIVITY</scope>
    <source>
        <tissue>Aorta</tissue>
        <tissue>Smooth muscle</tissue>
    </source>
</reference>
<reference key="2">
    <citation type="journal article" date="2000" name="Am. J. Physiol.">
        <title>Immunoelectron microscopic localization of NBC3 sodium-bicarbonate cotransporter in rat kidney.</title>
        <authorList>
            <person name="Kwon T.-H."/>
            <person name="Pushkin A."/>
            <person name="Abuladze N."/>
            <person name="Nielsen S."/>
            <person name="Kurtz I."/>
        </authorList>
    </citation>
    <scope>SUBCELLULAR LOCATION</scope>
    <scope>TISSUE SPECIFICITY</scope>
</reference>
<reference key="3">
    <citation type="journal article" date="2000" name="Am. J. Physiol.">
        <title>Immunolocalization of electroneutral Na-HCO(3)(-) cotransporter in rat kidney.</title>
        <authorList>
            <person name="Vorum H."/>
            <person name="Kwon T.-H."/>
            <person name="Fulton C."/>
            <person name="Simonsen B."/>
            <person name="Choi I."/>
            <person name="Boron W.F."/>
            <person name="Maunsbach A.B."/>
            <person name="Nielsen S."/>
            <person name="Aalkjaer C."/>
        </authorList>
    </citation>
    <scope>SUBCELLULAR LOCATION</scope>
    <scope>GLYCOSYLATION</scope>
    <scope>TISSUE SPECIFICITY</scope>
</reference>
<reference key="4">
    <citation type="journal article" date="2000" name="J. Androl.">
        <title>Immunolocalization of NBC3 and NHE3 in the rat epididymis: colocalization of NBC3 and the vacuolar H+-ATPase.</title>
        <authorList>
            <person name="Pushkin A."/>
            <person name="Clark I."/>
            <person name="Kwon T.-H."/>
            <person name="Nielsen S."/>
            <person name="Kurtz I."/>
        </authorList>
    </citation>
    <scope>SUBCELLULAR LOCATION</scope>
    <scope>TISSUE SPECIFICITY</scope>
</reference>
<reference key="5">
    <citation type="journal article" date="2002" name="J. Biol. Chem.">
        <title>The cystic fibrosis transmembrane conductance regulator interacts with and regulates the activity of the HCO3- salvage transporter human Na+-HCO3-cotransport isoform 3.</title>
        <authorList>
            <person name="Park M."/>
            <person name="Ko S.B.H."/>
            <person name="Choi J.Y."/>
            <person name="Muallem G."/>
            <person name="Thomas P.J."/>
            <person name="Pushkin A."/>
            <person name="Lee M.-S."/>
            <person name="Kim J.Y."/>
            <person name="Lee M.G."/>
            <person name="Muallem S."/>
            <person name="Kurtz I."/>
        </authorList>
    </citation>
    <scope>INTERACTION WITH CFTR</scope>
</reference>
<reference key="6">
    <citation type="journal article" date="2004" name="Am. J. Physiol.">
        <title>NBCn1 is a basolateral Na+-HCO3- cotransporter in rat kidney inner medullary collecting ducts.</title>
        <authorList>
            <person name="Praetorius J."/>
            <person name="Kim Y.-H."/>
            <person name="Bouzinova E.V."/>
            <person name="Frische S."/>
            <person name="Rojek A."/>
            <person name="Aalkjaer C."/>
            <person name="Nielsen S."/>
        </authorList>
    </citation>
    <scope>SUBCELLULAR LOCATION</scope>
    <scope>FUNCTION</scope>
    <scope>TRANSPORTER ACTIVITY</scope>
    <scope>TISSUE SPECIFICITY</scope>
    <scope>ACTIVITY REGULATION</scope>
</reference>
<reference key="7">
    <citation type="journal article" date="2004" name="J. Physiol. (Lond.)">
        <title>Basolateral Na+-dependent HCO3- transporter NBCn1-mediated HCO3-influx in rat medullary thick ascending limb.</title>
        <authorList>
            <person name="Odgaard E."/>
            <person name="Jakobsen J.K."/>
            <person name="Frische S."/>
            <person name="Praetorius J."/>
            <person name="Nielsen S."/>
            <person name="Aalkjaer C."/>
            <person name="Leipziger J."/>
        </authorList>
    </citation>
    <scope>ALTERNATIVE SPLICING (ISOFORMS 4 AND 5)</scope>
    <scope>TISSUE SPECIFICITY</scope>
    <scope>INDUCTION</scope>
    <scope>FUNCTION</scope>
    <scope>TRANSPORTER ACTIVITY</scope>
    <scope>SUBCELLULAR LOCATION</scope>
    <scope>ACTIVITY REGULATION</scope>
</reference>
<reference key="8">
    <citation type="journal article" date="2005" name="Hum. Mol. Genet.">
        <title>Scaffold protein harmonin (USH1C) provides molecular links between Usher syndrome type 1 and type 2.</title>
        <authorList>
            <person name="Reiners J."/>
            <person name="van Wijk E."/>
            <person name="Maerker T."/>
            <person name="Zimmermann U."/>
            <person name="Juergens K."/>
            <person name="te Brinke H."/>
            <person name="Overlack N."/>
            <person name="Roepman R."/>
            <person name="Knipper M."/>
            <person name="Kremer H."/>
            <person name="Wolfrum U."/>
        </authorList>
    </citation>
    <scope>TISSUE SPECIFICITY</scope>
    <scope>SUBCELLULAR LOCATION</scope>
</reference>
<reference key="9">
    <citation type="journal article" date="2005" name="J. Biol. Chem.">
        <title>Molecular and functional characterization of the electroneutral Na/HCO3 cotransporter NBCn1 in rat hippocampal neurons.</title>
        <authorList>
            <person name="Cooper D.S."/>
            <person name="Saxena N.C."/>
            <person name="Yang H.S."/>
            <person name="Lee H.J."/>
            <person name="Moring A.G."/>
            <person name="Lee A."/>
            <person name="Choi I."/>
        </authorList>
    </citation>
    <scope>ALTERNATIVE SPLICING (ISOFORM 6)</scope>
    <scope>TISSUE SPECIFICITY (ISOFORM 6)</scope>
    <scope>TRANSPORTER ACTIVITY (ISOFORM 6)</scope>
    <scope>SUBCELLULAR LOCATION (ISOFORM 6)</scope>
</reference>
<reference key="10">
    <citation type="journal article" date="2006" name="Am. J. Physiol.">
        <title>An anti-NH2-terminal antibody localizes NBCn1 to heart endothelia and skeletal and vascular smooth muscle cells.</title>
        <authorList>
            <person name="Damkier H.H."/>
            <person name="Nielsen S."/>
            <person name="Praetorius J."/>
        </authorList>
    </citation>
    <scope>TISSUE SPECIFICITY</scope>
    <scope>SUBCELLULAR LOCATION</scope>
</reference>
<reference key="11">
    <citation type="journal article" date="2012" name="Nat. Commun.">
        <title>Quantitative maps of protein phosphorylation sites across 14 different rat organs and tissues.</title>
        <authorList>
            <person name="Lundby A."/>
            <person name="Secher A."/>
            <person name="Lage K."/>
            <person name="Nordsborg N.B."/>
            <person name="Dmytriyev A."/>
            <person name="Lundby C."/>
            <person name="Olsen J.V."/>
        </authorList>
    </citation>
    <scope>PHOSPHORYLATION [LARGE SCALE ANALYSIS] AT SER-89; SER-155; SER-247; SER-404 AND SER-407</scope>
    <scope>PHOSPHORYLATION [LARGE SCALE ANALYSIS] AT SER-1201 (ISOFORM 2)</scope>
    <scope>PHOSPHORYLATION [LARGE SCALE ANALYSIS] AT SER-1188 (ISOFORM 3)</scope>
    <scope>PHOSPHORYLATION [LARGE SCALE ANALYSIS] AT SER-1078 (ISOFORM 4)</scope>
    <scope>PHOSPHORYLATION [LARGE SCALE ANALYSIS] AT SER-263 (ISOFORMS 4 AND 6)</scope>
    <scope>PHOSPHORYLATION [LARGE SCALE ANALYSIS] AT SER-1067 (ISOFORM 5)</scope>
    <scope>IDENTIFICATION BY MASS SPECTROMETRY [LARGE SCALE ANALYSIS]</scope>
</reference>
<reference key="12">
    <citation type="journal article" date="2018" name="Sci. Rep.">
        <title>Trafficking, localization and degradation of the Na+,HCO3- co-transporter NBCn1 in kidney and breast epithelial cells.</title>
        <authorList>
            <person name="Olesen C.W."/>
            <person name="Vogensen J."/>
            <person name="Axholm I."/>
            <person name="Severin M."/>
            <person name="Schnipper J."/>
            <person name="Pedersen I.S."/>
            <person name="von Stemann J.H."/>
            <person name="Schroeder J.M."/>
            <person name="Christensen D.P."/>
            <person name="Pedersen S.F."/>
        </authorList>
    </citation>
    <scope>TRANSPORTER ACTIVITY (ISOFORM 2)</scope>
    <scope>SUBCELLULAR LOCATION (ISOFORM 2)</scope>
    <scope>INTERACTION WITH RACK1 (ISOFORM 2)</scope>
    <scope>REGION (ISOFORM 2)</scope>
    <scope>LYSOSOME-MEDIATED DEGRADATION (ISOFORM 2)</scope>
</reference>
<feature type="chain" id="PRO_0000079235" description="Sodium bicarbonate cotransporter 3">
    <location>
        <begin position="1"/>
        <end position="1218"/>
    </location>
</feature>
<feature type="topological domain" description="Extracellular" evidence="5">
    <location>
        <begin position="1"/>
        <end position="612"/>
    </location>
</feature>
<feature type="transmembrane region" description="Helical" evidence="5">
    <location>
        <begin position="613"/>
        <end position="633"/>
    </location>
</feature>
<feature type="topological domain" description="Cytoplasmic" evidence="5">
    <location>
        <begin position="634"/>
        <end position="641"/>
    </location>
</feature>
<feature type="transmembrane region" description="Helical" evidence="5">
    <location>
        <begin position="642"/>
        <end position="662"/>
    </location>
</feature>
<feature type="topological domain" description="Extracellular" evidence="5">
    <location>
        <begin position="663"/>
        <end position="699"/>
    </location>
</feature>
<feature type="transmembrane region" description="Helical" evidence="5">
    <location>
        <begin position="700"/>
        <end position="720"/>
    </location>
</feature>
<feature type="topological domain" description="Cytoplasmic" evidence="5">
    <location>
        <begin position="721"/>
        <end position="729"/>
    </location>
</feature>
<feature type="transmembrane region" description="Helical" evidence="5">
    <location>
        <begin position="730"/>
        <end position="750"/>
    </location>
</feature>
<feature type="topological domain" description="Extracellular" evidence="5">
    <location>
        <begin position="751"/>
        <end position="821"/>
    </location>
</feature>
<feature type="transmembrane region" description="Helical" evidence="5">
    <location>
        <begin position="822"/>
        <end position="842"/>
    </location>
</feature>
<feature type="topological domain" description="Cytoplasmic" evidence="5">
    <location>
        <begin position="843"/>
        <end position="865"/>
    </location>
</feature>
<feature type="transmembrane region" description="Helical" evidence="5">
    <location>
        <begin position="866"/>
        <end position="886"/>
    </location>
</feature>
<feature type="topological domain" description="Extracellular" evidence="5">
    <location>
        <begin position="887"/>
        <end position="912"/>
    </location>
</feature>
<feature type="transmembrane region" description="Helical" evidence="5">
    <location>
        <begin position="913"/>
        <end position="933"/>
    </location>
</feature>
<feature type="topological domain" description="Cytoplasmic" evidence="5">
    <location>
        <begin position="934"/>
        <end position="958"/>
    </location>
</feature>
<feature type="transmembrane region" description="Helical" evidence="5">
    <location>
        <begin position="959"/>
        <end position="979"/>
    </location>
</feature>
<feature type="topological domain" description="Extracellular" evidence="5">
    <location>
        <begin position="980"/>
        <end position="1015"/>
    </location>
</feature>
<feature type="transmembrane region" description="Helical" evidence="5">
    <location>
        <begin position="1016"/>
        <end position="1036"/>
    </location>
</feature>
<feature type="topological domain" description="Cytoplasmic" evidence="5">
    <location>
        <begin position="1037"/>
        <end position="1038"/>
    </location>
</feature>
<feature type="transmembrane region" description="Helical" evidence="5">
    <location>
        <begin position="1039"/>
        <end position="1059"/>
    </location>
</feature>
<feature type="topological domain" description="Extracellular" evidence="5">
    <location>
        <begin position="1060"/>
        <end position="1096"/>
    </location>
</feature>
<feature type="transmembrane region" description="Helical" evidence="5">
    <location>
        <begin position="1097"/>
        <end position="1117"/>
    </location>
</feature>
<feature type="topological domain" description="Cytoplasmic" evidence="5">
    <location>
        <begin position="1118"/>
        <end position="1218"/>
    </location>
</feature>
<feature type="region of interest" description="Disordered" evidence="6">
    <location>
        <begin position="1"/>
        <end position="31"/>
    </location>
</feature>
<feature type="region of interest" description="Disordered" evidence="6">
    <location>
        <begin position="53"/>
        <end position="99"/>
    </location>
</feature>
<feature type="region of interest" description="Disordered" evidence="6">
    <location>
        <begin position="294"/>
        <end position="350"/>
    </location>
</feature>
<feature type="region of interest" description="Disordered" evidence="6">
    <location>
        <begin position="364"/>
        <end position="412"/>
    </location>
</feature>
<feature type="region of interest" description="Disordered" evidence="6">
    <location>
        <begin position="536"/>
        <end position="577"/>
    </location>
</feature>
<feature type="region of interest" description="Essential for cell membrane localization and transport activity" evidence="3">
    <location>
        <begin position="1012"/>
        <end position="1135"/>
    </location>
</feature>
<feature type="region of interest" description="CA2-binding" evidence="1">
    <location>
        <begin position="1138"/>
        <end position="1140"/>
    </location>
</feature>
<feature type="region of interest" description="Disordered" evidence="6">
    <location>
        <begin position="1148"/>
        <end position="1172"/>
    </location>
</feature>
<feature type="short sequence motif" description="PDZ-binding" evidence="1">
    <location>
        <begin position="1215"/>
        <end position="1218"/>
    </location>
</feature>
<feature type="compositionally biased region" description="Basic residues" evidence="6">
    <location>
        <begin position="60"/>
        <end position="77"/>
    </location>
</feature>
<feature type="compositionally biased region" description="Basic and acidic residues" evidence="6">
    <location>
        <begin position="78"/>
        <end position="90"/>
    </location>
</feature>
<feature type="compositionally biased region" description="Pro residues" evidence="6">
    <location>
        <begin position="308"/>
        <end position="318"/>
    </location>
</feature>
<feature type="compositionally biased region" description="Low complexity" evidence="6">
    <location>
        <begin position="319"/>
        <end position="337"/>
    </location>
</feature>
<feature type="compositionally biased region" description="Polar residues" evidence="6">
    <location>
        <begin position="383"/>
        <end position="396"/>
    </location>
</feature>
<feature type="compositionally biased region" description="Basic and acidic residues" evidence="6">
    <location>
        <begin position="567"/>
        <end position="576"/>
    </location>
</feature>
<feature type="compositionally biased region" description="Basic and acidic residues" evidence="6">
    <location>
        <begin position="1148"/>
        <end position="1165"/>
    </location>
</feature>
<feature type="modified residue" description="Phosphoserine" evidence="2">
    <location>
        <position position="57"/>
    </location>
</feature>
<feature type="modified residue" description="Phosphoserine" evidence="3">
    <location>
        <position position="60"/>
    </location>
</feature>
<feature type="modified residue" description="Phosphoserine" evidence="20">
    <location>
        <position position="89"/>
    </location>
</feature>
<feature type="modified residue" description="Phosphoserine" evidence="20">
    <location>
        <position position="155"/>
    </location>
</feature>
<feature type="modified residue" description="Phosphoserine" evidence="2">
    <location>
        <position position="238"/>
    </location>
</feature>
<feature type="modified residue" description="Phosphoserine" evidence="20">
    <location>
        <position position="247"/>
    </location>
</feature>
<feature type="modified residue" description="Phosphoserine" evidence="2">
    <location>
        <position position="386"/>
    </location>
</feature>
<feature type="modified residue" description="Phosphoserine" evidence="20">
    <location>
        <position position="404"/>
    </location>
</feature>
<feature type="modified residue" description="Phosphoserine" evidence="20">
    <location>
        <position position="407"/>
    </location>
</feature>
<feature type="modified residue" description="Phosphoserine" evidence="3">
    <location>
        <position position="411"/>
    </location>
</feature>
<feature type="modified residue" description="Phosphoserine" evidence="3">
    <location>
        <position position="560"/>
    </location>
</feature>
<feature type="modified residue" description="Phosphothreonine" evidence="3">
    <location>
        <position position="1171"/>
    </location>
</feature>
<feature type="modified residue" description="Phosphoserine" evidence="3">
    <location>
        <position position="1180"/>
    </location>
</feature>
<feature type="modified residue" description="Phosphoserine" evidence="3">
    <location>
        <position position="1217"/>
    </location>
</feature>
<feature type="glycosylation site" description="N-linked (GlcNAc...) asparagine" evidence="5">
    <location>
        <position position="176"/>
    </location>
</feature>
<feature type="glycosylation site" description="N-linked (GlcNAc...) asparagine" evidence="5">
    <location>
        <position position="274"/>
    </location>
</feature>
<feature type="glycosylation site" description="N-linked (GlcNAc...) asparagine" evidence="5">
    <location>
        <position position="410"/>
    </location>
</feature>
<feature type="glycosylation site" description="N-linked (GlcNAc...) asparagine" evidence="5">
    <location>
        <position position="780"/>
    </location>
</feature>
<feature type="glycosylation site" description="N-linked (GlcNAc...) asparagine" evidence="5">
    <location>
        <position position="790"/>
    </location>
</feature>
<feature type="glycosylation site" description="N-linked (GlcNAc...) asparagine" evidence="5">
    <location>
        <position position="800"/>
    </location>
</feature>
<feature type="disulfide bond" evidence="4">
    <location>
        <begin position="770"/>
        <end position="772"/>
    </location>
</feature>
<feature type="disulfide bond" evidence="4">
    <location>
        <begin position="806"/>
        <end position="818"/>
    </location>
</feature>
<feature type="splice variant" id="VSP_017169" description="In isoform 3." evidence="18">
    <location>
        <begin position="245"/>
        <end position="257"/>
    </location>
</feature>
<feature type="splice variant" id="VSP_017170" description="In isoform 5." evidence="19">
    <location>
        <begin position="245"/>
        <end position="255"/>
    </location>
</feature>
<feature type="splice variant" id="VSP_017171" description="In isoform 4, isoform 5 and isoform 6." evidence="19">
    <location>
        <begin position="256"/>
        <end position="378"/>
    </location>
</feature>
<feature type="splice variant" id="VSP_017172" description="In isoform 2, isoform 3, isoform 4 and isoform 5." evidence="18">
    <original>S</original>
    <variation>SIDPSVVNISDEMAKTAQWKALSMNTENAKVTRPNMS</variation>
    <location>
        <position position="1192"/>
    </location>
</feature>
<feature type="region of interest" description="Essential for membrane localization" evidence="17">
    <location sequence="Q9R1N3-2">
        <begin position="1118"/>
        <end position="1254"/>
    </location>
</feature>
<feature type="region of interest" description="Essential for interaction with RACK1" evidence="17">
    <location sequence="Q9R1N3-2">
        <begin position="1118"/>
        <end position="1140"/>
    </location>
</feature>
<feature type="modified residue" description="Phosphoserine" evidence="20">
    <location sequence="Q9R1N3-2">
        <position position="1201"/>
    </location>
</feature>
<feature type="modified residue" description="Phosphoserine" evidence="20">
    <location sequence="Q9R1N3-3">
        <position position="1188"/>
    </location>
</feature>
<feature type="modified residue" description="Phosphoserine" evidence="20">
    <location sequence="Q9R1N3-4">
        <position position="263"/>
    </location>
</feature>
<feature type="modified residue" description="Phosphoserine" evidence="20">
    <location sequence="Q9R1N3-4">
        <position position="1078"/>
    </location>
</feature>
<feature type="modified residue" description="Phosphoserine" evidence="20">
    <location sequence="Q9R1N3-5">
        <position position="1067"/>
    </location>
</feature>
<feature type="modified residue" description="Phosphoserine" evidence="20">
    <location sequence="Q9R1N3-6">
        <position position="263"/>
    </location>
</feature>
<proteinExistence type="evidence at protein level"/>
<name>S4A7_RAT</name>
<gene>
    <name type="primary">Slc4a7</name>
    <name type="synonym">Nbc</name>
    <name type="synonym">Nbc2</name>
    <name type="synonym">Nbc3</name>
    <name type="synonym">Nbcn1</name>
</gene>
<evidence type="ECO:0000250" key="1"/>
<evidence type="ECO:0000250" key="2">
    <source>
        <dbReference type="UniProtKB" id="Q8BTY2"/>
    </source>
</evidence>
<evidence type="ECO:0000250" key="3">
    <source>
        <dbReference type="UniProtKB" id="Q9Y6M7"/>
    </source>
</evidence>
<evidence type="ECO:0000250" key="4">
    <source>
        <dbReference type="UniProtKB" id="Q9Y6R1"/>
    </source>
</evidence>
<evidence type="ECO:0000255" key="5"/>
<evidence type="ECO:0000256" key="6">
    <source>
        <dbReference type="SAM" id="MobiDB-lite"/>
    </source>
</evidence>
<evidence type="ECO:0000269" key="7">
    <source>
    </source>
</evidence>
<evidence type="ECO:0000269" key="8">
    <source>
    </source>
</evidence>
<evidence type="ECO:0000269" key="9">
    <source>
    </source>
</evidence>
<evidence type="ECO:0000269" key="10">
    <source>
    </source>
</evidence>
<evidence type="ECO:0000269" key="11">
    <source>
    </source>
</evidence>
<evidence type="ECO:0000269" key="12">
    <source>
    </source>
</evidence>
<evidence type="ECO:0000269" key="13">
    <source>
    </source>
</evidence>
<evidence type="ECO:0000269" key="14">
    <source>
    </source>
</evidence>
<evidence type="ECO:0000269" key="15">
    <source>
    </source>
</evidence>
<evidence type="ECO:0000269" key="16">
    <source>
    </source>
</evidence>
<evidence type="ECO:0000269" key="17">
    <source>
    </source>
</evidence>
<evidence type="ECO:0000303" key="18">
    <source>
    </source>
</evidence>
<evidence type="ECO:0000305" key="19"/>
<evidence type="ECO:0007744" key="20">
    <source>
    </source>
</evidence>
<sequence>MEADGAGEQMRPLLTRGPDEEAVVDLGKTSSTVNTKFEKEELESHRAVYVGVHVPFSKESRRRHRHRGHKHHHRRRKDKDSDKEDGRESPSYDTPSQRVQFILGTEDDDEEHIPHDLFTEMDELCYRDGEEYEWKETARWLKFEEDVEDGGDRWSKPYVATLSLHSLFELRSCILNGTVMLDMRASTLDEIADMVLDNMIASGQLDDSIRENVREALLKRHHHQNEKRFTSRIPLVRSFADIGKKHSDPHLLERNGEGLSASRHSLRTGLSASNLSLRGESPLSLLLSHLLPSSRAGTPAGSRCTTPVPTPQNSPPSSPSLSRLTSRSSQQTQPQAPEVLVSPDRDDIPRVVIHPPEEDIEALKGQEQKNEENTDFTPGILASPQSAPGNLDSSKSGEVKGNGSGGSRENSTVDFSKVDMNFMRKIPTGAEASNVLVGEVDFLERPIIAFVRLAPAVLLSGLTEVPVPTRFLFLLLGPAGKAPQYHEIGRSIATLMTDEIFHDVAYKAKDRNDLLSGIDEFLDQVTVLPPGEWDPSIRIEPPKSVPSQEKRKIPAFPNGSAPVSADPPKEADHHAGPELQRTGRLFGGLILDIKRKAPFFLSDFKDALSLQCLASILFLYCACMSPVITFGGLLGEATEGRISAIESLFGASLTGIAYSLFAGQPLTILGSTGPVLVFEKILFKFCRDYHLSYLSLRTSIGLWTSFLCIVLVATDASSLVCYITRFTEEAFAALICIIFIYEALEKLFHLGEIYAFNMHNNLDALTSYTCVCAEPSNPSNETVELWERKNVTAASISWANLTVSECKTFHGMFVGSACGPHGPYVPDVLFWCVVLFFTTFFLSSFLKQFKTKRYFPTKVRSTISDFAVFLTIVIMVAIDYLVGIPSPKLHVPEKFEPTDPSRGWIISPLGDNPWWTLLIAAVPALLCTILIFMDQQITAVIINRKEHKLKKGAGYHLDLLMVAVMLGVCSIMGLPWFVAATVLSISHVNSLKVESECSAPGEQPKFLGIREQRVTGLMIFILMGLSVFMTSVLKFIPMPVLYGVFLYMGVSSLKGIQFFDRIKLFGMPAKHQPDLIYLRYVPLWKVHVFTVVQLTCLVLLWVIKASAAAVVFPMMVLALVFVRKLMDLCFTKRELSWLDDLMPESKKKKEDDKKKKEKEEAERMLQGDGDTVHLPFERGSLLQIPVKTLKYSPEKPVSVTINFEDEPSKKYMDAETSL</sequence>
<dbReference type="EMBL" id="AF069511">
    <property type="protein sequence ID" value="AAF14345.1"/>
    <property type="molecule type" value="mRNA"/>
</dbReference>
<dbReference type="EMBL" id="AF070475">
    <property type="protein sequence ID" value="AAD46389.1"/>
    <property type="molecule type" value="mRNA"/>
</dbReference>
<dbReference type="EMBL" id="AF080106">
    <property type="protein sequence ID" value="AAD47142.1"/>
    <property type="molecule type" value="mRNA"/>
</dbReference>
<dbReference type="RefSeq" id="NP_001257790.1">
    <molecule id="Q9R1N3-1"/>
    <property type="nucleotide sequence ID" value="NM_001270861.2"/>
</dbReference>
<dbReference type="RefSeq" id="NP_001400661.1">
    <molecule id="Q9R1N3-4"/>
    <property type="nucleotide sequence ID" value="NM_001413732.1"/>
</dbReference>
<dbReference type="RefSeq" id="NP_478118.1">
    <molecule id="Q9R1N3-2"/>
    <property type="nucleotide sequence ID" value="NM_058211.3"/>
</dbReference>
<dbReference type="RefSeq" id="XP_038948887.1">
    <molecule id="Q9R1N3-6"/>
    <property type="nucleotide sequence ID" value="XM_039092959.2"/>
</dbReference>
<dbReference type="SMR" id="Q9R1N3"/>
<dbReference type="BioGRID" id="250777">
    <property type="interactions" value="1"/>
</dbReference>
<dbReference type="FunCoup" id="Q9R1N3">
    <property type="interactions" value="1973"/>
</dbReference>
<dbReference type="IntAct" id="Q9R1N3">
    <property type="interactions" value="1"/>
</dbReference>
<dbReference type="MINT" id="Q9R1N3"/>
<dbReference type="STRING" id="10116.ENSRNOP00000008759"/>
<dbReference type="TCDB" id="2.A.31.2.1">
    <property type="family name" value="the anion exchanger (ae) family"/>
</dbReference>
<dbReference type="GlyCosmos" id="Q9R1N3">
    <property type="glycosylation" value="6 sites, No reported glycans"/>
</dbReference>
<dbReference type="GlyGen" id="Q9R1N3">
    <property type="glycosylation" value="7 sites"/>
</dbReference>
<dbReference type="iPTMnet" id="Q9R1N3"/>
<dbReference type="PhosphoSitePlus" id="Q9R1N3"/>
<dbReference type="SwissPalm" id="Q9R1N3"/>
<dbReference type="jPOST" id="Q9R1N3"/>
<dbReference type="PaxDb" id="10116-ENSRNOP00000008759"/>
<dbReference type="DNASU" id="117955"/>
<dbReference type="GeneID" id="117955"/>
<dbReference type="KEGG" id="rno:117955"/>
<dbReference type="AGR" id="RGD:621208"/>
<dbReference type="CTD" id="9497"/>
<dbReference type="RGD" id="621208">
    <property type="gene designation" value="Slc4a7"/>
</dbReference>
<dbReference type="VEuPathDB" id="HostDB:ENSRNOG00000005957"/>
<dbReference type="eggNOG" id="KOG1172">
    <property type="taxonomic scope" value="Eukaryota"/>
</dbReference>
<dbReference type="InParanoid" id="Q9R1N3"/>
<dbReference type="OrthoDB" id="44653at9989"/>
<dbReference type="PhylomeDB" id="Q9R1N3"/>
<dbReference type="Reactome" id="R-RNO-425381">
    <property type="pathway name" value="Bicarbonate transporters"/>
</dbReference>
<dbReference type="Reactome" id="R-RNO-9013405">
    <property type="pathway name" value="RHOD GTPase cycle"/>
</dbReference>
<dbReference type="Reactome" id="R-RNO-9013406">
    <property type="pathway name" value="RHOQ GTPase cycle"/>
</dbReference>
<dbReference type="Reactome" id="R-RNO-9013407">
    <property type="pathway name" value="RHOH GTPase cycle"/>
</dbReference>
<dbReference type="Reactome" id="R-RNO-9035034">
    <property type="pathway name" value="RHOF GTPase cycle"/>
</dbReference>
<dbReference type="PRO" id="PR:Q9R1N3"/>
<dbReference type="Proteomes" id="UP000002494">
    <property type="component" value="Chromosome 15"/>
</dbReference>
<dbReference type="Bgee" id="ENSRNOG00000005957">
    <property type="expression patterns" value="Expressed in duodenum and 18 other cell types or tissues"/>
</dbReference>
<dbReference type="ExpressionAtlas" id="Q9R1N3">
    <property type="expression patterns" value="baseline and differential"/>
</dbReference>
<dbReference type="GO" id="GO:0016324">
    <property type="term" value="C:apical plasma membrane"/>
    <property type="evidence" value="ECO:0000314"/>
    <property type="project" value="UniProtKB"/>
</dbReference>
<dbReference type="GO" id="GO:0016323">
    <property type="term" value="C:basolateral plasma membrane"/>
    <property type="evidence" value="ECO:0000314"/>
    <property type="project" value="UniProtKB"/>
</dbReference>
<dbReference type="GO" id="GO:0005737">
    <property type="term" value="C:cytoplasm"/>
    <property type="evidence" value="ECO:0000266"/>
    <property type="project" value="RGD"/>
</dbReference>
<dbReference type="GO" id="GO:0031410">
    <property type="term" value="C:cytoplasmic vesicle"/>
    <property type="evidence" value="ECO:0000314"/>
    <property type="project" value="UniProtKB"/>
</dbReference>
<dbReference type="GO" id="GO:0016020">
    <property type="term" value="C:membrane"/>
    <property type="evidence" value="ECO:0000266"/>
    <property type="project" value="RGD"/>
</dbReference>
<dbReference type="GO" id="GO:0005886">
    <property type="term" value="C:plasma membrane"/>
    <property type="evidence" value="ECO:0000314"/>
    <property type="project" value="UniProtKB"/>
</dbReference>
<dbReference type="GO" id="GO:0032420">
    <property type="term" value="C:stereocilium"/>
    <property type="evidence" value="ECO:0000314"/>
    <property type="project" value="RGD"/>
</dbReference>
<dbReference type="GO" id="GO:0008509">
    <property type="term" value="F:monoatomic anion transmembrane transporter activity"/>
    <property type="evidence" value="ECO:0007669"/>
    <property type="project" value="InterPro"/>
</dbReference>
<dbReference type="GO" id="GO:0008510">
    <property type="term" value="F:sodium:bicarbonate symporter activity"/>
    <property type="evidence" value="ECO:0000314"/>
    <property type="project" value="UniProtKB"/>
</dbReference>
<dbReference type="GO" id="GO:0005452">
    <property type="term" value="F:solute:inorganic anion antiporter activity"/>
    <property type="evidence" value="ECO:0007669"/>
    <property type="project" value="InterPro"/>
</dbReference>
<dbReference type="GO" id="GO:0060117">
    <property type="term" value="P:auditory receptor cell development"/>
    <property type="evidence" value="ECO:0000266"/>
    <property type="project" value="RGD"/>
</dbReference>
<dbReference type="GO" id="GO:0015701">
    <property type="term" value="P:bicarbonate transport"/>
    <property type="evidence" value="ECO:0000318"/>
    <property type="project" value="GO_Central"/>
</dbReference>
<dbReference type="GO" id="GO:0060219">
    <property type="term" value="P:camera-type eye photoreceptor cell differentiation"/>
    <property type="evidence" value="ECO:0000266"/>
    <property type="project" value="RGD"/>
</dbReference>
<dbReference type="GO" id="GO:0071363">
    <property type="term" value="P:cellular response to growth factor stimulus"/>
    <property type="evidence" value="ECO:0000266"/>
    <property type="project" value="RGD"/>
</dbReference>
<dbReference type="GO" id="GO:0021747">
    <property type="term" value="P:cochlear nucleus development"/>
    <property type="evidence" value="ECO:0000266"/>
    <property type="project" value="RGD"/>
</dbReference>
<dbReference type="GO" id="GO:0035641">
    <property type="term" value="P:locomotory exploration behavior"/>
    <property type="evidence" value="ECO:0000266"/>
    <property type="project" value="RGD"/>
</dbReference>
<dbReference type="GO" id="GO:0090383">
    <property type="term" value="P:phagosome acidification"/>
    <property type="evidence" value="ECO:0000266"/>
    <property type="project" value="RGD"/>
</dbReference>
<dbReference type="GO" id="GO:0006164">
    <property type="term" value="P:purine nucleotide biosynthetic process"/>
    <property type="evidence" value="ECO:0000266"/>
    <property type="project" value="RGD"/>
</dbReference>
<dbReference type="GO" id="GO:0006221">
    <property type="term" value="P:pyrimidine nucleotide biosynthetic process"/>
    <property type="evidence" value="ECO:0000266"/>
    <property type="project" value="RGD"/>
</dbReference>
<dbReference type="GO" id="GO:0051453">
    <property type="term" value="P:regulation of intracellular pH"/>
    <property type="evidence" value="ECO:0000266"/>
    <property type="project" value="RGD"/>
</dbReference>
<dbReference type="GO" id="GO:0061299">
    <property type="term" value="P:retina vasculature morphogenesis in camera-type eye"/>
    <property type="evidence" value="ECO:0000266"/>
    <property type="project" value="RGD"/>
</dbReference>
<dbReference type="GO" id="GO:0046666">
    <property type="term" value="P:retinal cell programmed cell death"/>
    <property type="evidence" value="ECO:0000266"/>
    <property type="project" value="RGD"/>
</dbReference>
<dbReference type="GO" id="GO:0007605">
    <property type="term" value="P:sensory perception of sound"/>
    <property type="evidence" value="ECO:0000266"/>
    <property type="project" value="RGD"/>
</dbReference>
<dbReference type="GO" id="GO:0055085">
    <property type="term" value="P:transmembrane transport"/>
    <property type="evidence" value="ECO:0000318"/>
    <property type="project" value="GO_Central"/>
</dbReference>
<dbReference type="GO" id="GO:0007601">
    <property type="term" value="P:visual perception"/>
    <property type="evidence" value="ECO:0000266"/>
    <property type="project" value="RGD"/>
</dbReference>
<dbReference type="FunFam" id="1.10.287.570:FF:000001">
    <property type="entry name" value="Anion exchange protein"/>
    <property type="match status" value="1"/>
</dbReference>
<dbReference type="FunFam" id="3.40.930.10:FF:000001">
    <property type="entry name" value="Anion exchange protein"/>
    <property type="match status" value="1"/>
</dbReference>
<dbReference type="Gene3D" id="1.10.287.570">
    <property type="entry name" value="Helical hairpin bin"/>
    <property type="match status" value="1"/>
</dbReference>
<dbReference type="Gene3D" id="3.40.930.10">
    <property type="entry name" value="Mannitol-specific EII, Chain A"/>
    <property type="match status" value="1"/>
</dbReference>
<dbReference type="InterPro" id="IPR013769">
    <property type="entry name" value="Band3_cytoplasmic_dom"/>
</dbReference>
<dbReference type="InterPro" id="IPR011531">
    <property type="entry name" value="HCO3_transpt-like_TM_dom"/>
</dbReference>
<dbReference type="InterPro" id="IPR003020">
    <property type="entry name" value="HCO3_transpt_euk"/>
</dbReference>
<dbReference type="InterPro" id="IPR016152">
    <property type="entry name" value="PTrfase/Anion_transptr"/>
</dbReference>
<dbReference type="NCBIfam" id="TIGR00834">
    <property type="entry name" value="ae"/>
    <property type="match status" value="1"/>
</dbReference>
<dbReference type="PANTHER" id="PTHR11453">
    <property type="entry name" value="ANION EXCHANGE PROTEIN"/>
    <property type="match status" value="1"/>
</dbReference>
<dbReference type="PANTHER" id="PTHR11453:SF105">
    <property type="entry name" value="SODIUM BICARBONATE COTRANSPORTER 3"/>
    <property type="match status" value="1"/>
</dbReference>
<dbReference type="Pfam" id="PF07565">
    <property type="entry name" value="Band_3_cyto"/>
    <property type="match status" value="2"/>
</dbReference>
<dbReference type="Pfam" id="PF00955">
    <property type="entry name" value="HCO3_cotransp"/>
    <property type="match status" value="1"/>
</dbReference>
<dbReference type="PRINTS" id="PR01231">
    <property type="entry name" value="HCO3TRNSPORT"/>
</dbReference>
<dbReference type="SUPFAM" id="SSF55804">
    <property type="entry name" value="Phoshotransferase/anion transport protein"/>
    <property type="match status" value="2"/>
</dbReference>
<protein>
    <recommendedName>
        <fullName>Sodium bicarbonate cotransporter 3</fullName>
    </recommendedName>
    <alternativeName>
        <fullName>Electroneutral sodium bicarbonate cotransporter 1</fullName>
    </alternativeName>
    <alternativeName>
        <fullName>NBC-like protein</fullName>
    </alternativeName>
    <alternativeName>
        <fullName>Solute carrier family 4 member 7</fullName>
    </alternativeName>
</protein>
<keyword id="KW-0025">Alternative splicing</keyword>
<keyword id="KW-1003">Cell membrane</keyword>
<keyword id="KW-0966">Cell projection</keyword>
<keyword id="KW-1015">Disulfide bond</keyword>
<keyword id="KW-0325">Glycoprotein</keyword>
<keyword id="KW-0406">Ion transport</keyword>
<keyword id="KW-0472">Membrane</keyword>
<keyword id="KW-0597">Phosphoprotein</keyword>
<keyword id="KW-1185">Reference proteome</keyword>
<keyword id="KW-0915">Sodium</keyword>
<keyword id="KW-0739">Sodium transport</keyword>
<keyword id="KW-0769">Symport</keyword>
<keyword id="KW-0812">Transmembrane</keyword>
<keyword id="KW-1133">Transmembrane helix</keyword>
<keyword id="KW-0813">Transport</keyword>
<accession>Q9R1N3</accession>
<accession>Q9QYD5</accession>
<accession>Q9R1L1</accession>
<organism>
    <name type="scientific">Rattus norvegicus</name>
    <name type="common">Rat</name>
    <dbReference type="NCBI Taxonomy" id="10116"/>
    <lineage>
        <taxon>Eukaryota</taxon>
        <taxon>Metazoa</taxon>
        <taxon>Chordata</taxon>
        <taxon>Craniata</taxon>
        <taxon>Vertebrata</taxon>
        <taxon>Euteleostomi</taxon>
        <taxon>Mammalia</taxon>
        <taxon>Eutheria</taxon>
        <taxon>Euarchontoglires</taxon>
        <taxon>Glires</taxon>
        <taxon>Rodentia</taxon>
        <taxon>Myomorpha</taxon>
        <taxon>Muroidea</taxon>
        <taxon>Muridae</taxon>
        <taxon>Murinae</taxon>
        <taxon>Rattus</taxon>
    </lineage>
</organism>
<comment type="function">
    <text evidence="2 3 8 12 13">Electroneutral sodium- and bicarbonate-dependent cotransporter with a Na(+):HCO3(-) 1:1 stoichiometry (PubMed:10850716, PubMed:14673192, PubMed:15075186). Mediates the sodium-dependent bicarbonate transport important for pH recovery after acid load as well as for regulation of steady-state pH in the duodenum and vascular smooth muscle cells (By similarity). Plays a key role in macrophage acidification, mediating bicarbonate import into the cytoplasm which is crucial for net acid extrusion and maintenance of cytoplasmic pH during phagocytosis (By similarity). Provides cellular bicarbonate for de novo purine and pyrimidine synthesis and is a key mediator of de novo nucleotide synthesis downstream of mTORC1 signaling in proliferating cells (By similarity).</text>
</comment>
<comment type="catalytic activity">
    <reaction evidence="8 12 13">
        <text>hydrogencarbonate(in) + Na(+)(in) = hydrogencarbonate(out) + Na(+)(out)</text>
        <dbReference type="Rhea" id="RHEA:70267"/>
        <dbReference type="ChEBI" id="CHEBI:17544"/>
        <dbReference type="ChEBI" id="CHEBI:29101"/>
    </reaction>
</comment>
<comment type="catalytic activity">
    <molecule>Isoform 2</molecule>
    <reaction evidence="17">
        <text>hydrogencarbonate(in) + Na(+)(in) = hydrogencarbonate(out) + Na(+)(out)</text>
        <dbReference type="Rhea" id="RHEA:70267"/>
        <dbReference type="ChEBI" id="CHEBI:17544"/>
        <dbReference type="ChEBI" id="CHEBI:29101"/>
    </reaction>
</comment>
<comment type="catalytic activity">
    <molecule>Isoform 6</molecule>
    <reaction evidence="14">
        <text>hydrogencarbonate(in) + Na(+)(in) = hydrogencarbonate(out) + Na(+)(out)</text>
        <dbReference type="Rhea" id="RHEA:70267"/>
        <dbReference type="ChEBI" id="CHEBI:17544"/>
        <dbReference type="ChEBI" id="CHEBI:29101"/>
    </reaction>
</comment>
<comment type="activity regulation">
    <text evidence="12 13">Insensitive to stilbene derivatives.</text>
</comment>
<comment type="subunit">
    <text evidence="3 11">Interacts with USH1C. Forms a complex with ATP6V1B1 and NHERF1/EBP50. Interacts in a pH dependent-manner with CA2/carbonic anhydrase 2 (By similarity). Interacts with CFTR probably through NHERF1/EBP50.</text>
</comment>
<comment type="subunit">
    <molecule>Isoform 2</molecule>
    <text evidence="17">Interacts with RACK1.</text>
</comment>
<comment type="subcellular location">
    <subcellularLocation>
        <location evidence="7 10 12 13 15">Basolateral cell membrane</location>
        <topology evidence="5">Multi-pass membrane protein</topology>
    </subcellularLocation>
    <subcellularLocation>
        <location evidence="7 9">Apical cell membrane</location>
        <topology evidence="5">Multi-pass membrane protein</topology>
    </subcellularLocation>
    <subcellularLocation>
        <location evidence="16">Cell projection</location>
        <location evidence="16">Stereocilium</location>
    </subcellularLocation>
    <text evidence="16">Localizes to the stereocilia of cochlear outer hair cells and to the lateral membrane of cochlear inner hair cells.</text>
</comment>
<comment type="subcellular location">
    <molecule>Isoform 2</molecule>
    <subcellularLocation>
        <location evidence="17">Basolateral cell membrane</location>
        <topology evidence="5">Multi-pass membrane protein</topology>
    </subcellularLocation>
    <text evidence="17">RACK1 is important for its membrane localization.</text>
</comment>
<comment type="subcellular location">
    <molecule>Isoform 6</molecule>
    <subcellularLocation>
        <location evidence="14">Cell membrane</location>
        <topology evidence="5">Multi-pass membrane protein</topology>
    </subcellularLocation>
</comment>
<comment type="alternative products">
    <event type="alternative splicing"/>
    <isoform>
        <id>Q9R1N3-1</id>
        <name>1</name>
        <name>NBCn1-B</name>
        <name>NBCn1B</name>
        <sequence type="displayed"/>
    </isoform>
    <isoform>
        <id>Q9R1N3-2</id>
        <name>2</name>
        <name>NBCn1-D</name>
        <name>NBCn1D</name>
        <sequence type="described" ref="VSP_017172"/>
    </isoform>
    <isoform>
        <id>Q9R1N3-3</id>
        <name>3</name>
        <name>NBCn1-C</name>
        <name>NBCn1C</name>
        <sequence type="described" ref="VSP_017169 VSP_017172"/>
    </isoform>
    <isoform>
        <id>Q9R1N3-4</id>
        <name>4</name>
        <sequence type="described" ref="VSP_017171 VSP_017172"/>
    </isoform>
    <isoform>
        <id>Q9R1N3-5</id>
        <name>5</name>
        <sequence type="described" ref="VSP_017170 VSP_017171 VSP_017172"/>
    </isoform>
    <isoform>
        <id>Q9R1N3-6</id>
        <name>6</name>
        <name>NBCn1-E</name>
        <sequence type="described" ref="VSP_017171"/>
    </isoform>
</comment>
<comment type="tissue specificity">
    <text evidence="7 8 9 10 12 13 14 15 16">Expressed in aorta, ventricles, atrium, mesenteric artery, kidney, spleen, duodenum, jejunum, ileum, colon, lung, trachea, gastric fundus and pylorus, cerebrum, cerebellum, pancreas, liver, parotid gland, and epididymis. Expressed in the inner ear by cochlear outer and inner hair cells (at protein level). Highly expressed in testis and spleen.</text>
</comment>
<comment type="tissue specificity">
    <molecule>Isoform 4</molecule>
    <text evidence="12">Specifically expressed in kidney.</text>
</comment>
<comment type="tissue specificity">
    <molecule>Isoform 5</molecule>
    <text evidence="12">Specifically expressed in kidney.</text>
</comment>
<comment type="tissue specificity">
    <molecule>Isoform 6</molecule>
    <text evidence="14">Specifically expressed in hippocampal neurons.</text>
</comment>
<comment type="induction">
    <text evidence="12">Up-regulated in kidney upon metabolic acidosis.</text>
</comment>
<comment type="domain">
    <text evidence="3">The PDZ-binding motif mediates interaction with the CFTR, NHERF1/EBP50 complex and probably with USH1C.</text>
</comment>
<comment type="PTM">
    <molecule>Isoform 2</molecule>
    <text evidence="17">Undergoes lysosome-mediated degradation.</text>
</comment>
<comment type="PTM">
    <text evidence="10">N-glycosylated.</text>
</comment>
<comment type="similarity">
    <text evidence="19">Belongs to the anion exchanger (TC 2.A.31) family.</text>
</comment>